<reference key="1">
    <citation type="journal article" date="2008" name="Genome Biol.">
        <title>Encapsulated in silica: genome, proteome and physiology of the thermophilic bacterium Anoxybacillus flavithermus WK1.</title>
        <authorList>
            <person name="Saw J.H."/>
            <person name="Mountain B.W."/>
            <person name="Feng L."/>
            <person name="Omelchenko M.V."/>
            <person name="Hou S."/>
            <person name="Saito J.A."/>
            <person name="Stott M.B."/>
            <person name="Li D."/>
            <person name="Zhao G."/>
            <person name="Wu J."/>
            <person name="Galperin M.Y."/>
            <person name="Koonin E.V."/>
            <person name="Makarova K.S."/>
            <person name="Wolf Y.I."/>
            <person name="Rigden D.J."/>
            <person name="Dunfield P.F."/>
            <person name="Wang L."/>
            <person name="Alam M."/>
        </authorList>
    </citation>
    <scope>NUCLEOTIDE SEQUENCE [LARGE SCALE GENOMIC DNA]</scope>
    <source>
        <strain>DSM 21510 / WK1</strain>
    </source>
</reference>
<comment type="function">
    <text evidence="1">Catalyzes amidations at positions B, D, E, and G on adenosylcobyrinic A,C-diamide. NH(2) groups are provided by glutamine, and one molecule of ATP is hydrogenolyzed for each amidation.</text>
</comment>
<comment type="pathway">
    <text evidence="1">Cofactor biosynthesis; adenosylcobalamin biosynthesis.</text>
</comment>
<comment type="similarity">
    <text evidence="1">Belongs to the CobB/CobQ family. CobQ subfamily.</text>
</comment>
<feature type="chain" id="PRO_1000116431" description="Cobyric acid synthase">
    <location>
        <begin position="1"/>
        <end position="504"/>
    </location>
</feature>
<feature type="domain" description="GATase cobBQ-type" evidence="1">
    <location>
        <begin position="254"/>
        <end position="442"/>
    </location>
</feature>
<feature type="active site" description="Nucleophile" evidence="1">
    <location>
        <position position="336"/>
    </location>
</feature>
<feature type="active site" evidence="1">
    <location>
        <position position="434"/>
    </location>
</feature>
<protein>
    <recommendedName>
        <fullName evidence="1">Cobyric acid synthase</fullName>
    </recommendedName>
</protein>
<sequence length="504" mass="56580">MRRALPIMFQGTHSDAGKSMLATAFCRIFARNGWKTAPFKSQNMSLNSYVTLDGKEIGRAQGVQAEAAGVVATTHMNPILIKPSRDQEAQIVVHGKPYENMKASTYRNEFFHLGLELIQQSLHVLMNEYDRLVIEGAGSPAEVNLNDRELVNMRVARMANAPVVLVGDIERGGVFASLVGTLQLLEEQDRKRVIGVIINKFRGDLSLLEPGLRWFEQYTGVKVLGVVPYMHVRIDAEDSVALSRYATKKDDAKAIDVAVIRYPRISNFTDIDPFFAEPDCSVRFVSDASSLGEPDILILPGSKNTIEDVYFLTETGLFSSIQRLYERTNVTMIGICGGYQMLGECIKDPFHVETPLDAVAGLSLLPIETTLACEKTTVLSEGTLVYKNEMFDVKGYEIHMGRSIVKQGEPLILLSGKTDGCKTKDERVIGTYMHDLFHNDMFRHHLLNGVRRKKQLSPLMERPNYRQLRAQAFDDLADCVEKHVDVKAIERKMIEFQRGEHHAL</sequence>
<name>COBQ_ANOFW</name>
<organism>
    <name type="scientific">Anoxybacillus flavithermus (strain DSM 21510 / WK1)</name>
    <dbReference type="NCBI Taxonomy" id="491915"/>
    <lineage>
        <taxon>Bacteria</taxon>
        <taxon>Bacillati</taxon>
        <taxon>Bacillota</taxon>
        <taxon>Bacilli</taxon>
        <taxon>Bacillales</taxon>
        <taxon>Anoxybacillaceae</taxon>
        <taxon>Anoxybacillus</taxon>
    </lineage>
</organism>
<evidence type="ECO:0000255" key="1">
    <source>
        <dbReference type="HAMAP-Rule" id="MF_00028"/>
    </source>
</evidence>
<accession>B7GLS9</accession>
<proteinExistence type="inferred from homology"/>
<gene>
    <name evidence="1" type="primary">cobQ</name>
    <name type="ordered locus">Aflv_2170</name>
</gene>
<dbReference type="EMBL" id="CP000922">
    <property type="protein sequence ID" value="ACJ34529.1"/>
    <property type="molecule type" value="Genomic_DNA"/>
</dbReference>
<dbReference type="RefSeq" id="WP_012575707.1">
    <property type="nucleotide sequence ID" value="NC_011567.1"/>
</dbReference>
<dbReference type="SMR" id="B7GLS9"/>
<dbReference type="STRING" id="491915.Aflv_2170"/>
<dbReference type="GeneID" id="7038423"/>
<dbReference type="KEGG" id="afl:Aflv_2170"/>
<dbReference type="PATRIC" id="fig|491915.6.peg.2229"/>
<dbReference type="eggNOG" id="COG1492">
    <property type="taxonomic scope" value="Bacteria"/>
</dbReference>
<dbReference type="HOGENOM" id="CLU_019250_2_2_9"/>
<dbReference type="UniPathway" id="UPA00148"/>
<dbReference type="Proteomes" id="UP000000742">
    <property type="component" value="Chromosome"/>
</dbReference>
<dbReference type="GO" id="GO:0015420">
    <property type="term" value="F:ABC-type vitamin B12 transporter activity"/>
    <property type="evidence" value="ECO:0007669"/>
    <property type="project" value="UniProtKB-UniRule"/>
</dbReference>
<dbReference type="GO" id="GO:0003824">
    <property type="term" value="F:catalytic activity"/>
    <property type="evidence" value="ECO:0007669"/>
    <property type="project" value="InterPro"/>
</dbReference>
<dbReference type="GO" id="GO:0009236">
    <property type="term" value="P:cobalamin biosynthetic process"/>
    <property type="evidence" value="ECO:0007669"/>
    <property type="project" value="UniProtKB-UniRule"/>
</dbReference>
<dbReference type="CDD" id="cd05389">
    <property type="entry name" value="CobQ_N"/>
    <property type="match status" value="1"/>
</dbReference>
<dbReference type="CDD" id="cd01750">
    <property type="entry name" value="GATase1_CobQ"/>
    <property type="match status" value="1"/>
</dbReference>
<dbReference type="Gene3D" id="3.40.50.880">
    <property type="match status" value="1"/>
</dbReference>
<dbReference type="Gene3D" id="3.40.50.300">
    <property type="entry name" value="P-loop containing nucleotide triphosphate hydrolases"/>
    <property type="match status" value="1"/>
</dbReference>
<dbReference type="HAMAP" id="MF_00028">
    <property type="entry name" value="CobQ"/>
    <property type="match status" value="1"/>
</dbReference>
<dbReference type="InterPro" id="IPR029062">
    <property type="entry name" value="Class_I_gatase-like"/>
</dbReference>
<dbReference type="InterPro" id="IPR002586">
    <property type="entry name" value="CobQ/CobB/MinD/ParA_Nub-bd_dom"/>
</dbReference>
<dbReference type="InterPro" id="IPR033949">
    <property type="entry name" value="CobQ_GATase1"/>
</dbReference>
<dbReference type="InterPro" id="IPR047045">
    <property type="entry name" value="CobQ_N"/>
</dbReference>
<dbReference type="InterPro" id="IPR004459">
    <property type="entry name" value="CobQ_synth"/>
</dbReference>
<dbReference type="InterPro" id="IPR011698">
    <property type="entry name" value="GATase_3"/>
</dbReference>
<dbReference type="InterPro" id="IPR027417">
    <property type="entry name" value="P-loop_NTPase"/>
</dbReference>
<dbReference type="NCBIfam" id="TIGR00313">
    <property type="entry name" value="cobQ"/>
    <property type="match status" value="1"/>
</dbReference>
<dbReference type="NCBIfam" id="NF001989">
    <property type="entry name" value="PRK00784.1"/>
    <property type="match status" value="1"/>
</dbReference>
<dbReference type="PANTHER" id="PTHR21343:SF1">
    <property type="entry name" value="COBYRIC ACID SYNTHASE"/>
    <property type="match status" value="1"/>
</dbReference>
<dbReference type="PANTHER" id="PTHR21343">
    <property type="entry name" value="DETHIOBIOTIN SYNTHETASE"/>
    <property type="match status" value="1"/>
</dbReference>
<dbReference type="Pfam" id="PF01656">
    <property type="entry name" value="CbiA"/>
    <property type="match status" value="1"/>
</dbReference>
<dbReference type="Pfam" id="PF07685">
    <property type="entry name" value="GATase_3"/>
    <property type="match status" value="1"/>
</dbReference>
<dbReference type="SUPFAM" id="SSF52317">
    <property type="entry name" value="Class I glutamine amidotransferase-like"/>
    <property type="match status" value="1"/>
</dbReference>
<dbReference type="SUPFAM" id="SSF52540">
    <property type="entry name" value="P-loop containing nucleoside triphosphate hydrolases"/>
    <property type="match status" value="1"/>
</dbReference>
<dbReference type="PROSITE" id="PS51274">
    <property type="entry name" value="GATASE_COBBQ"/>
    <property type="match status" value="1"/>
</dbReference>
<keyword id="KW-0169">Cobalamin biosynthesis</keyword>
<keyword id="KW-0315">Glutamine amidotransferase</keyword>